<protein>
    <recommendedName>
        <fullName evidence="1">Cysteine desulfurase IscS</fullName>
        <ecNumber evidence="1">2.8.1.7</ecNumber>
    </recommendedName>
</protein>
<dbReference type="EC" id="2.8.1.7" evidence="1"/>
<dbReference type="EMBL" id="AE005674">
    <property type="protein sequence ID" value="AAN44076.2"/>
    <property type="molecule type" value="Genomic_DNA"/>
</dbReference>
<dbReference type="EMBL" id="AE014073">
    <property type="protein sequence ID" value="AAP17901.1"/>
    <property type="molecule type" value="Genomic_DNA"/>
</dbReference>
<dbReference type="RefSeq" id="WP_001295373.1">
    <property type="nucleotide sequence ID" value="NZ_WPGW01000021.1"/>
</dbReference>
<dbReference type="SMR" id="P0A6C0"/>
<dbReference type="MINT" id="P0A6C0"/>
<dbReference type="STRING" id="198214.SF2577"/>
<dbReference type="PaxDb" id="198214-SF2577"/>
<dbReference type="GeneID" id="93774606"/>
<dbReference type="KEGG" id="sfl:SF2577"/>
<dbReference type="KEGG" id="sfx:S2749"/>
<dbReference type="PATRIC" id="fig|198214.7.peg.3077"/>
<dbReference type="HOGENOM" id="CLU_003433_0_2_6"/>
<dbReference type="UniPathway" id="UPA00266"/>
<dbReference type="Proteomes" id="UP000001006">
    <property type="component" value="Chromosome"/>
</dbReference>
<dbReference type="Proteomes" id="UP000002673">
    <property type="component" value="Chromosome"/>
</dbReference>
<dbReference type="GO" id="GO:1990221">
    <property type="term" value="C:L-cysteine desulfurase complex"/>
    <property type="evidence" value="ECO:0007669"/>
    <property type="project" value="UniProtKB-ARBA"/>
</dbReference>
<dbReference type="GO" id="GO:0051537">
    <property type="term" value="F:2 iron, 2 sulfur cluster binding"/>
    <property type="evidence" value="ECO:0007669"/>
    <property type="project" value="UniProtKB-UniRule"/>
</dbReference>
<dbReference type="GO" id="GO:0031071">
    <property type="term" value="F:cysteine desulfurase activity"/>
    <property type="evidence" value="ECO:0007669"/>
    <property type="project" value="UniProtKB-UniRule"/>
</dbReference>
<dbReference type="GO" id="GO:0046872">
    <property type="term" value="F:metal ion binding"/>
    <property type="evidence" value="ECO:0007669"/>
    <property type="project" value="UniProtKB-KW"/>
</dbReference>
<dbReference type="GO" id="GO:0030170">
    <property type="term" value="F:pyridoxal phosphate binding"/>
    <property type="evidence" value="ECO:0007669"/>
    <property type="project" value="UniProtKB-UniRule"/>
</dbReference>
<dbReference type="GO" id="GO:0044571">
    <property type="term" value="P:[2Fe-2S] cluster assembly"/>
    <property type="evidence" value="ECO:0007669"/>
    <property type="project" value="UniProtKB-UniRule"/>
</dbReference>
<dbReference type="FunFam" id="3.40.640.10:FF:000003">
    <property type="entry name" value="Cysteine desulfurase IscS"/>
    <property type="match status" value="1"/>
</dbReference>
<dbReference type="FunFam" id="3.90.1150.10:FF:000002">
    <property type="entry name" value="Cysteine desulfurase IscS"/>
    <property type="match status" value="1"/>
</dbReference>
<dbReference type="Gene3D" id="3.90.1150.10">
    <property type="entry name" value="Aspartate Aminotransferase, domain 1"/>
    <property type="match status" value="1"/>
</dbReference>
<dbReference type="Gene3D" id="3.40.640.10">
    <property type="entry name" value="Type I PLP-dependent aspartate aminotransferase-like (Major domain)"/>
    <property type="match status" value="1"/>
</dbReference>
<dbReference type="HAMAP" id="MF_00331">
    <property type="entry name" value="Cys_desulf_IscS"/>
    <property type="match status" value="1"/>
</dbReference>
<dbReference type="InterPro" id="IPR000192">
    <property type="entry name" value="Aminotrans_V_dom"/>
</dbReference>
<dbReference type="InterPro" id="IPR020578">
    <property type="entry name" value="Aminotrans_V_PyrdxlP_BS"/>
</dbReference>
<dbReference type="InterPro" id="IPR010240">
    <property type="entry name" value="Cys_deSase_IscS"/>
</dbReference>
<dbReference type="InterPro" id="IPR016454">
    <property type="entry name" value="Cysteine_dSase"/>
</dbReference>
<dbReference type="InterPro" id="IPR015424">
    <property type="entry name" value="PyrdxlP-dep_Trfase"/>
</dbReference>
<dbReference type="InterPro" id="IPR015421">
    <property type="entry name" value="PyrdxlP-dep_Trfase_major"/>
</dbReference>
<dbReference type="InterPro" id="IPR015422">
    <property type="entry name" value="PyrdxlP-dep_Trfase_small"/>
</dbReference>
<dbReference type="NCBIfam" id="TIGR02006">
    <property type="entry name" value="IscS"/>
    <property type="match status" value="1"/>
</dbReference>
<dbReference type="NCBIfam" id="NF002806">
    <property type="entry name" value="PRK02948.1"/>
    <property type="match status" value="1"/>
</dbReference>
<dbReference type="NCBIfam" id="NF010611">
    <property type="entry name" value="PRK14012.1"/>
    <property type="match status" value="1"/>
</dbReference>
<dbReference type="PANTHER" id="PTHR11601:SF34">
    <property type="entry name" value="CYSTEINE DESULFURASE"/>
    <property type="match status" value="1"/>
</dbReference>
<dbReference type="PANTHER" id="PTHR11601">
    <property type="entry name" value="CYSTEINE DESULFURYLASE FAMILY MEMBER"/>
    <property type="match status" value="1"/>
</dbReference>
<dbReference type="Pfam" id="PF00266">
    <property type="entry name" value="Aminotran_5"/>
    <property type="match status" value="1"/>
</dbReference>
<dbReference type="PIRSF" id="PIRSF005572">
    <property type="entry name" value="NifS"/>
    <property type="match status" value="1"/>
</dbReference>
<dbReference type="SUPFAM" id="SSF53383">
    <property type="entry name" value="PLP-dependent transferases"/>
    <property type="match status" value="1"/>
</dbReference>
<dbReference type="PROSITE" id="PS00595">
    <property type="entry name" value="AA_TRANSFER_CLASS_5"/>
    <property type="match status" value="1"/>
</dbReference>
<gene>
    <name evidence="1" type="primary">iscS</name>
    <name type="ordered locus">SF2577</name>
    <name type="ordered locus">S2749</name>
</gene>
<organism>
    <name type="scientific">Shigella flexneri</name>
    <dbReference type="NCBI Taxonomy" id="623"/>
    <lineage>
        <taxon>Bacteria</taxon>
        <taxon>Pseudomonadati</taxon>
        <taxon>Pseudomonadota</taxon>
        <taxon>Gammaproteobacteria</taxon>
        <taxon>Enterobacterales</taxon>
        <taxon>Enterobacteriaceae</taxon>
        <taxon>Shigella</taxon>
    </lineage>
</organism>
<sequence length="404" mass="45090">MKLPIYLDYSATTPVDPRVAEKMMQFMTMDGTFGNPASRSHRFGWQAEEAVDIARNQIADLVGADPREIVFTSGATESDNLAIKGAANFYQKKGKHIITSKTEHKAVLDTCRQLEREGFEVTYLAPQRNGIIDLKELEAAMRDDTILVSIMHVNNEIGVVQDIAAIGEMCRARGIIYHVDATQSVGKLPIDLSQLKVDLMSFSGHKIYGPKGIGALYVRRKPRVRIEAQMHGGGHERGMRSGTLPVHQIVGMGEAYRIAKEEMATEMERLRGLRNRLWNGIKDIEEVYLNGDLEHGAPNILNVSFNYVEGESLIMALKDLAVSSGSACTSASLEPSYVLRALGLNDELAHSSIRFSLGRFTTEEEIDYTIELVRKSIGRLRDLSPLWEMYKQGVDLNSIEWAHH</sequence>
<keyword id="KW-0001">2Fe-2S</keyword>
<keyword id="KW-0963">Cytoplasm</keyword>
<keyword id="KW-0408">Iron</keyword>
<keyword id="KW-0411">Iron-sulfur</keyword>
<keyword id="KW-0479">Metal-binding</keyword>
<keyword id="KW-0663">Pyridoxal phosphate</keyword>
<keyword id="KW-1185">Reference proteome</keyword>
<keyword id="KW-0808">Transferase</keyword>
<evidence type="ECO:0000255" key="1">
    <source>
        <dbReference type="HAMAP-Rule" id="MF_00331"/>
    </source>
</evidence>
<proteinExistence type="inferred from homology"/>
<accession>P0A6C0</accession>
<accession>P39171</accession>
<accession>P76581</accession>
<accession>P76992</accession>
<accession>Q8XA86</accession>
<reference key="1">
    <citation type="journal article" date="2002" name="Nucleic Acids Res.">
        <title>Genome sequence of Shigella flexneri 2a: insights into pathogenicity through comparison with genomes of Escherichia coli K12 and O157.</title>
        <authorList>
            <person name="Jin Q."/>
            <person name="Yuan Z."/>
            <person name="Xu J."/>
            <person name="Wang Y."/>
            <person name="Shen Y."/>
            <person name="Lu W."/>
            <person name="Wang J."/>
            <person name="Liu H."/>
            <person name="Yang J."/>
            <person name="Yang F."/>
            <person name="Zhang X."/>
            <person name="Zhang J."/>
            <person name="Yang G."/>
            <person name="Wu H."/>
            <person name="Qu D."/>
            <person name="Dong J."/>
            <person name="Sun L."/>
            <person name="Xue Y."/>
            <person name="Zhao A."/>
            <person name="Gao Y."/>
            <person name="Zhu J."/>
            <person name="Kan B."/>
            <person name="Ding K."/>
            <person name="Chen S."/>
            <person name="Cheng H."/>
            <person name="Yao Z."/>
            <person name="He B."/>
            <person name="Chen R."/>
            <person name="Ma D."/>
            <person name="Qiang B."/>
            <person name="Wen Y."/>
            <person name="Hou Y."/>
            <person name="Yu J."/>
        </authorList>
    </citation>
    <scope>NUCLEOTIDE SEQUENCE [LARGE SCALE GENOMIC DNA]</scope>
    <source>
        <strain>301 / Serotype 2a</strain>
    </source>
</reference>
<reference key="2">
    <citation type="journal article" date="2003" name="Infect. Immun.">
        <title>Complete genome sequence and comparative genomics of Shigella flexneri serotype 2a strain 2457T.</title>
        <authorList>
            <person name="Wei J."/>
            <person name="Goldberg M.B."/>
            <person name="Burland V."/>
            <person name="Venkatesan M.M."/>
            <person name="Deng W."/>
            <person name="Fournier G."/>
            <person name="Mayhew G.F."/>
            <person name="Plunkett G. III"/>
            <person name="Rose D.J."/>
            <person name="Darling A."/>
            <person name="Mau B."/>
            <person name="Perna N.T."/>
            <person name="Payne S.M."/>
            <person name="Runyen-Janecky L.J."/>
            <person name="Zhou S."/>
            <person name="Schwartz D.C."/>
            <person name="Blattner F.R."/>
        </authorList>
    </citation>
    <scope>NUCLEOTIDE SEQUENCE [LARGE SCALE GENOMIC DNA]</scope>
    <source>
        <strain>ATCC 700930 / 2457T / Serotype 2a</strain>
    </source>
</reference>
<name>ISCS_SHIFL</name>
<comment type="function">
    <text evidence="1">Master enzyme that delivers sulfur to a number of partners involved in Fe-S cluster assembly, tRNA modification or cofactor biosynthesis. Catalyzes the removal of elemental sulfur and selenium atoms from cysteine and selenocysteine to produce alanine. Functions as a sulfur delivery protein for Fe-S cluster synthesis onto IscU, an Fe-S scaffold assembly protein, as well as other S acceptor proteins. Also functions as a selenium delivery protein in the pathway for the biosynthesis of selenophosphate.</text>
</comment>
<comment type="catalytic activity">
    <reaction evidence="1">
        <text>(sulfur carrier)-H + L-cysteine = (sulfur carrier)-SH + L-alanine</text>
        <dbReference type="Rhea" id="RHEA:43892"/>
        <dbReference type="Rhea" id="RHEA-COMP:14737"/>
        <dbReference type="Rhea" id="RHEA-COMP:14739"/>
        <dbReference type="ChEBI" id="CHEBI:29917"/>
        <dbReference type="ChEBI" id="CHEBI:35235"/>
        <dbReference type="ChEBI" id="CHEBI:57972"/>
        <dbReference type="ChEBI" id="CHEBI:64428"/>
        <dbReference type="EC" id="2.8.1.7"/>
    </reaction>
</comment>
<comment type="cofactor">
    <cofactor evidence="1">
        <name>pyridoxal 5'-phosphate</name>
        <dbReference type="ChEBI" id="CHEBI:597326"/>
    </cofactor>
</comment>
<comment type="pathway">
    <text evidence="1">Cofactor biosynthesis; iron-sulfur cluster biosynthesis.</text>
</comment>
<comment type="subunit">
    <text evidence="1">Homodimer. Forms a heterotetramer with IscU, interacts with other sulfur acceptors.</text>
</comment>
<comment type="subcellular location">
    <subcellularLocation>
        <location evidence="1">Cytoplasm</location>
    </subcellularLocation>
</comment>
<comment type="similarity">
    <text evidence="1">Belongs to the class-V pyridoxal-phosphate-dependent aminotransferase family. NifS/IscS subfamily.</text>
</comment>
<feature type="chain" id="PRO_0000150280" description="Cysteine desulfurase IscS">
    <location>
        <begin position="1"/>
        <end position="404"/>
    </location>
</feature>
<feature type="active site" description="Cysteine persulfide intermediate" evidence="1">
    <location>
        <position position="328"/>
    </location>
</feature>
<feature type="binding site" evidence="1">
    <location>
        <begin position="75"/>
        <end position="76"/>
    </location>
    <ligand>
        <name>pyridoxal 5'-phosphate</name>
        <dbReference type="ChEBI" id="CHEBI:597326"/>
    </ligand>
</feature>
<feature type="binding site" evidence="1">
    <location>
        <position position="155"/>
    </location>
    <ligand>
        <name>pyridoxal 5'-phosphate</name>
        <dbReference type="ChEBI" id="CHEBI:597326"/>
    </ligand>
</feature>
<feature type="binding site" evidence="1">
    <location>
        <position position="183"/>
    </location>
    <ligand>
        <name>pyridoxal 5'-phosphate</name>
        <dbReference type="ChEBI" id="CHEBI:597326"/>
    </ligand>
</feature>
<feature type="binding site" evidence="1">
    <location>
        <begin position="203"/>
        <end position="205"/>
    </location>
    <ligand>
        <name>pyridoxal 5'-phosphate</name>
        <dbReference type="ChEBI" id="CHEBI:597326"/>
    </ligand>
</feature>
<feature type="binding site" evidence="1">
    <location>
        <position position="243"/>
    </location>
    <ligand>
        <name>pyridoxal 5'-phosphate</name>
        <dbReference type="ChEBI" id="CHEBI:597326"/>
    </ligand>
</feature>
<feature type="binding site" description="via persulfide group" evidence="1">
    <location>
        <position position="328"/>
    </location>
    <ligand>
        <name>[2Fe-2S] cluster</name>
        <dbReference type="ChEBI" id="CHEBI:190135"/>
        <note>ligand shared with IscU</note>
    </ligand>
</feature>
<feature type="modified residue" description="N6-(pyridoxal phosphate)lysine" evidence="1">
    <location>
        <position position="206"/>
    </location>
</feature>